<sequence>MAKKGKKFQDAAKQVEALKAYAPKEALELVKKIDFAKFDATVETVYKLNVDTKQADQQLRGAVVLPNGTGKEQTVIVFAKGAKAEAAKAAGADVVGDDDLVQRIQDGWLDFDVAIATPDMMGQVGRLGRVLGPKNLMPNPKTGTVTMDVEKAVADSKSGKVTYRTDRDGNVHVPIGKVSFDVDQLLGNLQTINDTIVRLRPASVKGAYVQNVSVASTFGPGVKVDFSQF</sequence>
<name>RL1_PEDPA</name>
<organism>
    <name type="scientific">Pediococcus pentosaceus (strain ATCC 25745 / CCUG 21536 / LMG 10740 / 183-1w)</name>
    <dbReference type="NCBI Taxonomy" id="278197"/>
    <lineage>
        <taxon>Bacteria</taxon>
        <taxon>Bacillati</taxon>
        <taxon>Bacillota</taxon>
        <taxon>Bacilli</taxon>
        <taxon>Lactobacillales</taxon>
        <taxon>Lactobacillaceae</taxon>
        <taxon>Pediococcus</taxon>
    </lineage>
</organism>
<reference key="1">
    <citation type="journal article" date="2006" name="Proc. Natl. Acad. Sci. U.S.A.">
        <title>Comparative genomics of the lactic acid bacteria.</title>
        <authorList>
            <person name="Makarova K.S."/>
            <person name="Slesarev A."/>
            <person name="Wolf Y.I."/>
            <person name="Sorokin A."/>
            <person name="Mirkin B."/>
            <person name="Koonin E.V."/>
            <person name="Pavlov A."/>
            <person name="Pavlova N."/>
            <person name="Karamychev V."/>
            <person name="Polouchine N."/>
            <person name="Shakhova V."/>
            <person name="Grigoriev I."/>
            <person name="Lou Y."/>
            <person name="Rohksar D."/>
            <person name="Lucas S."/>
            <person name="Huang K."/>
            <person name="Goodstein D.M."/>
            <person name="Hawkins T."/>
            <person name="Plengvidhya V."/>
            <person name="Welker D."/>
            <person name="Hughes J."/>
            <person name="Goh Y."/>
            <person name="Benson A."/>
            <person name="Baldwin K."/>
            <person name="Lee J.-H."/>
            <person name="Diaz-Muniz I."/>
            <person name="Dosti B."/>
            <person name="Smeianov V."/>
            <person name="Wechter W."/>
            <person name="Barabote R."/>
            <person name="Lorca G."/>
            <person name="Altermann E."/>
            <person name="Barrangou R."/>
            <person name="Ganesan B."/>
            <person name="Xie Y."/>
            <person name="Rawsthorne H."/>
            <person name="Tamir D."/>
            <person name="Parker C."/>
            <person name="Breidt F."/>
            <person name="Broadbent J.R."/>
            <person name="Hutkins R."/>
            <person name="O'Sullivan D."/>
            <person name="Steele J."/>
            <person name="Unlu G."/>
            <person name="Saier M.H. Jr."/>
            <person name="Klaenhammer T."/>
            <person name="Richardson P."/>
            <person name="Kozyavkin S."/>
            <person name="Weimer B.C."/>
            <person name="Mills D.A."/>
        </authorList>
    </citation>
    <scope>NUCLEOTIDE SEQUENCE [LARGE SCALE GENOMIC DNA]</scope>
    <source>
        <strain>ATCC 25745 / CCUG 21536 / LMG 10740 / 183-1w</strain>
    </source>
</reference>
<accession>Q03E49</accession>
<keyword id="KW-0678">Repressor</keyword>
<keyword id="KW-0687">Ribonucleoprotein</keyword>
<keyword id="KW-0689">Ribosomal protein</keyword>
<keyword id="KW-0694">RNA-binding</keyword>
<keyword id="KW-0699">rRNA-binding</keyword>
<keyword id="KW-0810">Translation regulation</keyword>
<keyword id="KW-0820">tRNA-binding</keyword>
<gene>
    <name evidence="1" type="primary">rplA</name>
    <name type="ordered locus">PEPE_1492</name>
</gene>
<proteinExistence type="inferred from homology"/>
<comment type="function">
    <text evidence="1">Binds directly to 23S rRNA. The L1 stalk is quite mobile in the ribosome, and is involved in E site tRNA release.</text>
</comment>
<comment type="function">
    <text evidence="1">Protein L1 is also a translational repressor protein, it controls the translation of the L11 operon by binding to its mRNA.</text>
</comment>
<comment type="subunit">
    <text evidence="1">Part of the 50S ribosomal subunit.</text>
</comment>
<comment type="similarity">
    <text evidence="1">Belongs to the universal ribosomal protein uL1 family.</text>
</comment>
<evidence type="ECO:0000255" key="1">
    <source>
        <dbReference type="HAMAP-Rule" id="MF_01318"/>
    </source>
</evidence>
<evidence type="ECO:0000305" key="2"/>
<dbReference type="EMBL" id="CP000422">
    <property type="protein sequence ID" value="ABJ68523.1"/>
    <property type="molecule type" value="Genomic_DNA"/>
</dbReference>
<dbReference type="RefSeq" id="WP_002833258.1">
    <property type="nucleotide sequence ID" value="NC_008525.1"/>
</dbReference>
<dbReference type="SMR" id="Q03E49"/>
<dbReference type="STRING" id="278197.PEPE_1492"/>
<dbReference type="GeneID" id="33061916"/>
<dbReference type="KEGG" id="ppe:PEPE_1492"/>
<dbReference type="eggNOG" id="COG0081">
    <property type="taxonomic scope" value="Bacteria"/>
</dbReference>
<dbReference type="HOGENOM" id="CLU_062853_0_0_9"/>
<dbReference type="OrthoDB" id="9803740at2"/>
<dbReference type="Proteomes" id="UP000000773">
    <property type="component" value="Chromosome"/>
</dbReference>
<dbReference type="GO" id="GO:0015934">
    <property type="term" value="C:large ribosomal subunit"/>
    <property type="evidence" value="ECO:0007669"/>
    <property type="project" value="InterPro"/>
</dbReference>
<dbReference type="GO" id="GO:0019843">
    <property type="term" value="F:rRNA binding"/>
    <property type="evidence" value="ECO:0007669"/>
    <property type="project" value="UniProtKB-UniRule"/>
</dbReference>
<dbReference type="GO" id="GO:0003735">
    <property type="term" value="F:structural constituent of ribosome"/>
    <property type="evidence" value="ECO:0007669"/>
    <property type="project" value="InterPro"/>
</dbReference>
<dbReference type="GO" id="GO:0000049">
    <property type="term" value="F:tRNA binding"/>
    <property type="evidence" value="ECO:0007669"/>
    <property type="project" value="UniProtKB-KW"/>
</dbReference>
<dbReference type="GO" id="GO:0006417">
    <property type="term" value="P:regulation of translation"/>
    <property type="evidence" value="ECO:0007669"/>
    <property type="project" value="UniProtKB-KW"/>
</dbReference>
<dbReference type="GO" id="GO:0006412">
    <property type="term" value="P:translation"/>
    <property type="evidence" value="ECO:0007669"/>
    <property type="project" value="UniProtKB-UniRule"/>
</dbReference>
<dbReference type="CDD" id="cd00403">
    <property type="entry name" value="Ribosomal_L1"/>
    <property type="match status" value="1"/>
</dbReference>
<dbReference type="FunFam" id="3.40.50.790:FF:000001">
    <property type="entry name" value="50S ribosomal protein L1"/>
    <property type="match status" value="1"/>
</dbReference>
<dbReference type="Gene3D" id="3.30.190.20">
    <property type="match status" value="1"/>
</dbReference>
<dbReference type="Gene3D" id="3.40.50.790">
    <property type="match status" value="1"/>
</dbReference>
<dbReference type="HAMAP" id="MF_01318_B">
    <property type="entry name" value="Ribosomal_uL1_B"/>
    <property type="match status" value="1"/>
</dbReference>
<dbReference type="InterPro" id="IPR005878">
    <property type="entry name" value="Ribosom_uL1_bac-type"/>
</dbReference>
<dbReference type="InterPro" id="IPR002143">
    <property type="entry name" value="Ribosomal_uL1"/>
</dbReference>
<dbReference type="InterPro" id="IPR023674">
    <property type="entry name" value="Ribosomal_uL1-like"/>
</dbReference>
<dbReference type="InterPro" id="IPR028364">
    <property type="entry name" value="Ribosomal_uL1/biogenesis"/>
</dbReference>
<dbReference type="InterPro" id="IPR016095">
    <property type="entry name" value="Ribosomal_uL1_3-a/b-sand"/>
</dbReference>
<dbReference type="InterPro" id="IPR023673">
    <property type="entry name" value="Ribosomal_uL1_CS"/>
</dbReference>
<dbReference type="NCBIfam" id="TIGR01169">
    <property type="entry name" value="rplA_bact"/>
    <property type="match status" value="1"/>
</dbReference>
<dbReference type="PANTHER" id="PTHR36427">
    <property type="entry name" value="54S RIBOSOMAL PROTEIN L1, MITOCHONDRIAL"/>
    <property type="match status" value="1"/>
</dbReference>
<dbReference type="PANTHER" id="PTHR36427:SF3">
    <property type="entry name" value="LARGE RIBOSOMAL SUBUNIT PROTEIN UL1M"/>
    <property type="match status" value="1"/>
</dbReference>
<dbReference type="Pfam" id="PF00687">
    <property type="entry name" value="Ribosomal_L1"/>
    <property type="match status" value="1"/>
</dbReference>
<dbReference type="PIRSF" id="PIRSF002155">
    <property type="entry name" value="Ribosomal_L1"/>
    <property type="match status" value="1"/>
</dbReference>
<dbReference type="SUPFAM" id="SSF56808">
    <property type="entry name" value="Ribosomal protein L1"/>
    <property type="match status" value="1"/>
</dbReference>
<dbReference type="PROSITE" id="PS01199">
    <property type="entry name" value="RIBOSOMAL_L1"/>
    <property type="match status" value="1"/>
</dbReference>
<protein>
    <recommendedName>
        <fullName evidence="1">Large ribosomal subunit protein uL1</fullName>
    </recommendedName>
    <alternativeName>
        <fullName evidence="2">50S ribosomal protein L1</fullName>
    </alternativeName>
</protein>
<feature type="chain" id="PRO_0000308067" description="Large ribosomal subunit protein uL1">
    <location>
        <begin position="1"/>
        <end position="229"/>
    </location>
</feature>